<organism>
    <name type="scientific">Thermotoga maritima (strain ATCC 43589 / DSM 3109 / JCM 10099 / NBRC 100826 / MSB8)</name>
    <dbReference type="NCBI Taxonomy" id="243274"/>
    <lineage>
        <taxon>Bacteria</taxon>
        <taxon>Thermotogati</taxon>
        <taxon>Thermotogota</taxon>
        <taxon>Thermotogae</taxon>
        <taxon>Thermotogales</taxon>
        <taxon>Thermotogaceae</taxon>
        <taxon>Thermotoga</taxon>
    </lineage>
</organism>
<name>ATPB_THEMA</name>
<evidence type="ECO:0000255" key="1">
    <source>
        <dbReference type="HAMAP-Rule" id="MF_01347"/>
    </source>
</evidence>
<dbReference type="EC" id="7.1.2.2" evidence="1"/>
<dbReference type="EMBL" id="Y15792">
    <property type="protein sequence ID" value="CAA75784.1"/>
    <property type="molecule type" value="Genomic_DNA"/>
</dbReference>
<dbReference type="EMBL" id="AE000512">
    <property type="protein sequence ID" value="AAD36677.1"/>
    <property type="molecule type" value="Genomic_DNA"/>
</dbReference>
<dbReference type="PIR" id="D72231">
    <property type="entry name" value="D72231"/>
</dbReference>
<dbReference type="RefSeq" id="NP_229410.1">
    <property type="nucleotide sequence ID" value="NC_000853.1"/>
</dbReference>
<dbReference type="RefSeq" id="WP_004082059.1">
    <property type="nucleotide sequence ID" value="NZ_CP011107.1"/>
</dbReference>
<dbReference type="SMR" id="O50550"/>
<dbReference type="FunCoup" id="O50550">
    <property type="interactions" value="270"/>
</dbReference>
<dbReference type="STRING" id="243274.TM_1610"/>
<dbReference type="PaxDb" id="243274-THEMA_06200"/>
<dbReference type="EnsemblBacteria" id="AAD36677">
    <property type="protein sequence ID" value="AAD36677"/>
    <property type="gene ID" value="TM_1610"/>
</dbReference>
<dbReference type="KEGG" id="tma:TM1610"/>
<dbReference type="KEGG" id="tmi:THEMA_06200"/>
<dbReference type="KEGG" id="tmm:Tmari_1618"/>
<dbReference type="KEGG" id="tmw:THMA_1650"/>
<dbReference type="eggNOG" id="COG0055">
    <property type="taxonomic scope" value="Bacteria"/>
</dbReference>
<dbReference type="InParanoid" id="O50550"/>
<dbReference type="OrthoDB" id="9801639at2"/>
<dbReference type="Proteomes" id="UP000008183">
    <property type="component" value="Chromosome"/>
</dbReference>
<dbReference type="GO" id="GO:0005886">
    <property type="term" value="C:plasma membrane"/>
    <property type="evidence" value="ECO:0007669"/>
    <property type="project" value="UniProtKB-SubCell"/>
</dbReference>
<dbReference type="GO" id="GO:0045259">
    <property type="term" value="C:proton-transporting ATP synthase complex"/>
    <property type="evidence" value="ECO:0007669"/>
    <property type="project" value="UniProtKB-KW"/>
</dbReference>
<dbReference type="GO" id="GO:0005524">
    <property type="term" value="F:ATP binding"/>
    <property type="evidence" value="ECO:0007669"/>
    <property type="project" value="UniProtKB-UniRule"/>
</dbReference>
<dbReference type="GO" id="GO:0016887">
    <property type="term" value="F:ATP hydrolysis activity"/>
    <property type="evidence" value="ECO:0007669"/>
    <property type="project" value="InterPro"/>
</dbReference>
<dbReference type="GO" id="GO:0046933">
    <property type="term" value="F:proton-transporting ATP synthase activity, rotational mechanism"/>
    <property type="evidence" value="ECO:0007669"/>
    <property type="project" value="UniProtKB-UniRule"/>
</dbReference>
<dbReference type="CDD" id="cd18110">
    <property type="entry name" value="ATP-synt_F1_beta_C"/>
    <property type="match status" value="1"/>
</dbReference>
<dbReference type="CDD" id="cd18115">
    <property type="entry name" value="ATP-synt_F1_beta_N"/>
    <property type="match status" value="1"/>
</dbReference>
<dbReference type="CDD" id="cd01133">
    <property type="entry name" value="F1-ATPase_beta_CD"/>
    <property type="match status" value="1"/>
</dbReference>
<dbReference type="FunFam" id="1.10.1140.10:FF:000001">
    <property type="entry name" value="ATP synthase subunit beta"/>
    <property type="match status" value="1"/>
</dbReference>
<dbReference type="FunFam" id="2.40.10.170:FF:000005">
    <property type="entry name" value="ATP synthase subunit beta"/>
    <property type="match status" value="1"/>
</dbReference>
<dbReference type="FunFam" id="3.40.50.300:FF:000026">
    <property type="entry name" value="ATP synthase subunit beta"/>
    <property type="match status" value="1"/>
</dbReference>
<dbReference type="Gene3D" id="2.40.10.170">
    <property type="match status" value="1"/>
</dbReference>
<dbReference type="Gene3D" id="1.10.1140.10">
    <property type="entry name" value="Bovine Mitochondrial F1-atpase, Atp Synthase Beta Chain, Chain D, domain 3"/>
    <property type="match status" value="1"/>
</dbReference>
<dbReference type="Gene3D" id="3.40.50.300">
    <property type="entry name" value="P-loop containing nucleotide triphosphate hydrolases"/>
    <property type="match status" value="1"/>
</dbReference>
<dbReference type="HAMAP" id="MF_01347">
    <property type="entry name" value="ATP_synth_beta_bact"/>
    <property type="match status" value="1"/>
</dbReference>
<dbReference type="InterPro" id="IPR003593">
    <property type="entry name" value="AAA+_ATPase"/>
</dbReference>
<dbReference type="InterPro" id="IPR055190">
    <property type="entry name" value="ATP-synt_VA_C"/>
</dbReference>
<dbReference type="InterPro" id="IPR005722">
    <property type="entry name" value="ATP_synth_F1_bsu"/>
</dbReference>
<dbReference type="InterPro" id="IPR020003">
    <property type="entry name" value="ATPase_a/bsu_AS"/>
</dbReference>
<dbReference type="InterPro" id="IPR050053">
    <property type="entry name" value="ATPase_alpha/beta_chains"/>
</dbReference>
<dbReference type="InterPro" id="IPR004100">
    <property type="entry name" value="ATPase_F1/V1/A1_a/bsu_N"/>
</dbReference>
<dbReference type="InterPro" id="IPR036121">
    <property type="entry name" value="ATPase_F1/V1/A1_a/bsu_N_sf"/>
</dbReference>
<dbReference type="InterPro" id="IPR000194">
    <property type="entry name" value="ATPase_F1/V1/A1_a/bsu_nucl-bd"/>
</dbReference>
<dbReference type="InterPro" id="IPR024034">
    <property type="entry name" value="ATPase_F1/V1_b/a_C"/>
</dbReference>
<dbReference type="InterPro" id="IPR027417">
    <property type="entry name" value="P-loop_NTPase"/>
</dbReference>
<dbReference type="NCBIfam" id="TIGR01039">
    <property type="entry name" value="atpD"/>
    <property type="match status" value="1"/>
</dbReference>
<dbReference type="PANTHER" id="PTHR15184">
    <property type="entry name" value="ATP SYNTHASE"/>
    <property type="match status" value="1"/>
</dbReference>
<dbReference type="PANTHER" id="PTHR15184:SF71">
    <property type="entry name" value="ATP SYNTHASE SUBUNIT BETA, MITOCHONDRIAL"/>
    <property type="match status" value="1"/>
</dbReference>
<dbReference type="Pfam" id="PF00006">
    <property type="entry name" value="ATP-synt_ab"/>
    <property type="match status" value="1"/>
</dbReference>
<dbReference type="Pfam" id="PF02874">
    <property type="entry name" value="ATP-synt_ab_N"/>
    <property type="match status" value="1"/>
</dbReference>
<dbReference type="Pfam" id="PF22919">
    <property type="entry name" value="ATP-synt_VA_C"/>
    <property type="match status" value="1"/>
</dbReference>
<dbReference type="SMART" id="SM00382">
    <property type="entry name" value="AAA"/>
    <property type="match status" value="1"/>
</dbReference>
<dbReference type="SUPFAM" id="SSF47917">
    <property type="entry name" value="C-terminal domain of alpha and beta subunits of F1 ATP synthase"/>
    <property type="match status" value="1"/>
</dbReference>
<dbReference type="SUPFAM" id="SSF50615">
    <property type="entry name" value="N-terminal domain of alpha and beta subunits of F1 ATP synthase"/>
    <property type="match status" value="1"/>
</dbReference>
<dbReference type="SUPFAM" id="SSF52540">
    <property type="entry name" value="P-loop containing nucleoside triphosphate hydrolases"/>
    <property type="match status" value="1"/>
</dbReference>
<dbReference type="PROSITE" id="PS00152">
    <property type="entry name" value="ATPASE_ALPHA_BETA"/>
    <property type="match status" value="1"/>
</dbReference>
<comment type="function">
    <text evidence="1">Produces ATP from ADP in the presence of a proton gradient across the membrane. The catalytic sites are hosted primarily by the beta subunits.</text>
</comment>
<comment type="catalytic activity">
    <reaction evidence="1">
        <text>ATP + H2O + 4 H(+)(in) = ADP + phosphate + 5 H(+)(out)</text>
        <dbReference type="Rhea" id="RHEA:57720"/>
        <dbReference type="ChEBI" id="CHEBI:15377"/>
        <dbReference type="ChEBI" id="CHEBI:15378"/>
        <dbReference type="ChEBI" id="CHEBI:30616"/>
        <dbReference type="ChEBI" id="CHEBI:43474"/>
        <dbReference type="ChEBI" id="CHEBI:456216"/>
        <dbReference type="EC" id="7.1.2.2"/>
    </reaction>
</comment>
<comment type="subunit">
    <text evidence="1">F-type ATPases have 2 components, CF(1) - the catalytic core - and CF(0) - the membrane proton channel. CF(1) has five subunits: alpha(3), beta(3), gamma(1), delta(1), epsilon(1). CF(0) has three main subunits: a(1), b(2) and c(9-12). The alpha and beta chains form an alternating ring which encloses part of the gamma chain. CF(1) is attached to CF(0) by a central stalk formed by the gamma and epsilon chains, while a peripheral stalk is formed by the delta and b chains.</text>
</comment>
<comment type="subcellular location">
    <subcellularLocation>
        <location evidence="1">Cell inner membrane</location>
        <topology evidence="1">Peripheral membrane protein</topology>
    </subcellularLocation>
</comment>
<comment type="similarity">
    <text evidence="1">Belongs to the ATPase alpha/beta chains family.</text>
</comment>
<keyword id="KW-0066">ATP synthesis</keyword>
<keyword id="KW-0067">ATP-binding</keyword>
<keyword id="KW-0997">Cell inner membrane</keyword>
<keyword id="KW-1003">Cell membrane</keyword>
<keyword id="KW-0139">CF(1)</keyword>
<keyword id="KW-0375">Hydrogen ion transport</keyword>
<keyword id="KW-0406">Ion transport</keyword>
<keyword id="KW-0472">Membrane</keyword>
<keyword id="KW-0547">Nucleotide-binding</keyword>
<keyword id="KW-1185">Reference proteome</keyword>
<keyword id="KW-1278">Translocase</keyword>
<keyword id="KW-0813">Transport</keyword>
<feature type="chain" id="PRO_0000144484" description="ATP synthase subunit beta">
    <location>
        <begin position="1"/>
        <end position="468"/>
    </location>
</feature>
<feature type="binding site" evidence="1">
    <location>
        <begin position="155"/>
        <end position="162"/>
    </location>
    <ligand>
        <name>ATP</name>
        <dbReference type="ChEBI" id="CHEBI:30616"/>
    </ligand>
</feature>
<sequence length="468" mass="51241">MAKGSKGFIVSIMGPVVDVKFPEEELPDIYNALEVVNPQTGQKVVLEVEQLIGDGVVRTVAMDSTDGLTKGLEVVDTGAPITAPVGKEVLGRILNVIGEPVDEAGEIKAKERWPIHRPAPELVEQSTEIEILETGIKVIDLLAPFPKGGKIGFFGGAGVGKTVLVMELIRNIAIEHKGFSVFAGVGERTREGNELWLEMQESGVLGNTVLVFGQMNEPPGARFRVALTALTIAEYFRDVEGRDVLLFIDNIFRFVQAGSEVSALLGRMPSAVGYQPTLATDMGELQERITSTRRGSITSVQAIYVPADDITDPAPATTFAHLDATVVLSRRIAELGLYPAVDPLDSSSKILDPAIVGREHYEVARGVQEVLQRYKDLQDIIAILGVEELSPEDKLVVHRARRIQRFLSQPFHVAERFTGRPGRYVPIEETIRGFKEILDGKLDDVPEQAFLMAGNIDEVKERAKEMRS</sequence>
<protein>
    <recommendedName>
        <fullName evidence="1">ATP synthase subunit beta</fullName>
        <ecNumber evidence="1">7.1.2.2</ecNumber>
    </recommendedName>
    <alternativeName>
        <fullName evidence="1">ATP synthase F1 sector subunit beta</fullName>
    </alternativeName>
    <alternativeName>
        <fullName evidence="1">F-ATPase subunit beta</fullName>
    </alternativeName>
</protein>
<gene>
    <name evidence="1" type="primary">atpD</name>
    <name type="ordered locus">TM_1610</name>
</gene>
<reference key="1">
    <citation type="journal article" date="1998" name="Electrophoresis">
        <title>Bacterial phylogeny based on comparative sequence analysis.</title>
        <authorList>
            <person name="Ludwig W."/>
            <person name="Strunk O."/>
            <person name="Klugbauer S."/>
            <person name="Klugbauer N."/>
            <person name="Weizenegger M."/>
            <person name="Neumaier J."/>
            <person name="Bachleitner M."/>
            <person name="Schleifer K.H."/>
        </authorList>
    </citation>
    <scope>NUCLEOTIDE SEQUENCE [GENOMIC DNA]</scope>
    <source>
        <strain>ATCC 43589 / DSM 3109 / JCM 10099 / NBRC 100826 / MSB8</strain>
    </source>
</reference>
<reference key="2">
    <citation type="journal article" date="1999" name="Nature">
        <title>Evidence for lateral gene transfer between Archaea and Bacteria from genome sequence of Thermotoga maritima.</title>
        <authorList>
            <person name="Nelson K.E."/>
            <person name="Clayton R.A."/>
            <person name="Gill S.R."/>
            <person name="Gwinn M.L."/>
            <person name="Dodson R.J."/>
            <person name="Haft D.H."/>
            <person name="Hickey E.K."/>
            <person name="Peterson J.D."/>
            <person name="Nelson W.C."/>
            <person name="Ketchum K.A."/>
            <person name="McDonald L.A."/>
            <person name="Utterback T.R."/>
            <person name="Malek J.A."/>
            <person name="Linher K.D."/>
            <person name="Garrett M.M."/>
            <person name="Stewart A.M."/>
            <person name="Cotton M.D."/>
            <person name="Pratt M.S."/>
            <person name="Phillips C.A."/>
            <person name="Richardson D.L."/>
            <person name="Heidelberg J.F."/>
            <person name="Sutton G.G."/>
            <person name="Fleischmann R.D."/>
            <person name="Eisen J.A."/>
            <person name="White O."/>
            <person name="Salzberg S.L."/>
            <person name="Smith H.O."/>
            <person name="Venter J.C."/>
            <person name="Fraser C.M."/>
        </authorList>
    </citation>
    <scope>NUCLEOTIDE SEQUENCE [LARGE SCALE GENOMIC DNA]</scope>
    <source>
        <strain>ATCC 43589 / DSM 3109 / JCM 10099 / NBRC 100826 / MSB8</strain>
    </source>
</reference>
<proteinExistence type="inferred from homology"/>
<accession>O50550</accession>